<proteinExistence type="evidence at protein level"/>
<accession>P9WND7</accession>
<accession>L0T788</accession>
<accession>P95040</accession>
<accession>Q8VKG1</accession>
<keyword id="KW-0285">Flavoprotein</keyword>
<keyword id="KW-0288">FMN</keyword>
<keyword id="KW-0560">Oxidoreductase</keyword>
<keyword id="KW-1185">Reference proteome</keyword>
<comment type="function">
    <text evidence="1">Involved in the biosynthesis of the enzyme cofactor mycofactocin (MFT). Catalyzes the oxidative deamination of AHDP (3-amino-5-[(4-hydroxyphenyl)methyl]-4,4-dimethyl-2-pyrrolidin-2-one), forming an alpha-keto amide moiety on the resulting molecule, which is called pre-mycofactocin (PMFT). This reaction occurs via a 5-[(4-hydroxyphenyl)methyl]-3-imino-4,4-dimethylpyrrolidin-2-one intermediate, which converts to PMFT. The alpha-keto amide moiety is the redox-active center for the redox activity of mycofactocin.</text>
</comment>
<comment type="catalytic activity">
    <reaction evidence="1">
        <text>3-amino-5-[(4-hydroxyphenyl)methyl]-4,4-dimethyl-2-pyrrolidin-2-one + O2 + H2O = pre-mycofactocin + H2O2 + NH4(+)</text>
        <dbReference type="Rhea" id="RHEA:65508"/>
        <dbReference type="ChEBI" id="CHEBI:15377"/>
        <dbReference type="ChEBI" id="CHEBI:15379"/>
        <dbReference type="ChEBI" id="CHEBI:16240"/>
        <dbReference type="ChEBI" id="CHEBI:28938"/>
        <dbReference type="ChEBI" id="CHEBI:150862"/>
        <dbReference type="ChEBI" id="CHEBI:150863"/>
        <dbReference type="EC" id="1.4.3.26"/>
    </reaction>
</comment>
<comment type="cofactor">
    <cofactor evidence="1">
        <name>FMN</name>
        <dbReference type="ChEBI" id="CHEBI:58210"/>
    </cofactor>
</comment>
<comment type="similarity">
    <text evidence="2">Belongs to the FMN-dependent alpha-hydroxy acid dehydrogenase family.</text>
</comment>
<protein>
    <recommendedName>
        <fullName>Pre-mycofactocin synthase</fullName>
        <shortName>PMFT synthase</shortName>
        <ecNumber evidence="1">1.4.3.26</ecNumber>
    </recommendedName>
</protein>
<gene>
    <name evidence="3" type="primary">mftD</name>
    <name type="synonym">lldD1</name>
    <name type="ordered locus">Rv0694</name>
</gene>
<evidence type="ECO:0000250" key="1">
    <source>
        <dbReference type="UniProtKB" id="A0PM50"/>
    </source>
</evidence>
<evidence type="ECO:0000255" key="2">
    <source>
        <dbReference type="PROSITE-ProRule" id="PRU00683"/>
    </source>
</evidence>
<evidence type="ECO:0000303" key="3">
    <source>
    </source>
</evidence>
<name>MFTD_MYCTU</name>
<dbReference type="EC" id="1.4.3.26" evidence="1"/>
<dbReference type="EMBL" id="AL123456">
    <property type="protein sequence ID" value="CCP43438.1"/>
    <property type="molecule type" value="Genomic_DNA"/>
</dbReference>
<dbReference type="PIR" id="A70641">
    <property type="entry name" value="A70641"/>
</dbReference>
<dbReference type="RefSeq" id="NP_215208.1">
    <property type="nucleotide sequence ID" value="NC_000962.3"/>
</dbReference>
<dbReference type="RefSeq" id="WP_003898557.1">
    <property type="nucleotide sequence ID" value="NZ_NVQJ01000007.1"/>
</dbReference>
<dbReference type="SMR" id="P9WND7"/>
<dbReference type="STRING" id="83332.Rv0694"/>
<dbReference type="PaxDb" id="83332-Rv0694"/>
<dbReference type="DNASU" id="888310"/>
<dbReference type="GeneID" id="45424656"/>
<dbReference type="GeneID" id="888310"/>
<dbReference type="KEGG" id="mtu:Rv0694"/>
<dbReference type="KEGG" id="mtv:RVBD_0694"/>
<dbReference type="TubercuList" id="Rv0694"/>
<dbReference type="eggNOG" id="COG1304">
    <property type="taxonomic scope" value="Bacteria"/>
</dbReference>
<dbReference type="InParanoid" id="P9WND7"/>
<dbReference type="OrthoDB" id="9770452at2"/>
<dbReference type="PhylomeDB" id="P9WND7"/>
<dbReference type="BRENDA" id="1.4.3.26">
    <property type="organism ID" value="3445"/>
</dbReference>
<dbReference type="Proteomes" id="UP000001584">
    <property type="component" value="Chromosome"/>
</dbReference>
<dbReference type="GO" id="GO:0005886">
    <property type="term" value="C:plasma membrane"/>
    <property type="evidence" value="ECO:0007005"/>
    <property type="project" value="MTBBASE"/>
</dbReference>
<dbReference type="GO" id="GO:0010181">
    <property type="term" value="F:FMN binding"/>
    <property type="evidence" value="ECO:0007669"/>
    <property type="project" value="InterPro"/>
</dbReference>
<dbReference type="GO" id="GO:0016491">
    <property type="term" value="F:oxidoreductase activity"/>
    <property type="evidence" value="ECO:0007669"/>
    <property type="project" value="UniProtKB-KW"/>
</dbReference>
<dbReference type="GO" id="GO:0140604">
    <property type="term" value="P:mycofactocin biosynthetic process"/>
    <property type="evidence" value="ECO:0000250"/>
    <property type="project" value="UniProtKB"/>
</dbReference>
<dbReference type="CDD" id="cd02809">
    <property type="entry name" value="alpha_hydroxyacid_oxid_FMN"/>
    <property type="match status" value="1"/>
</dbReference>
<dbReference type="FunFam" id="3.20.20.70:FF:000203">
    <property type="entry name" value="Mycofactocin system heme/flavin oxidoreductase MftD"/>
    <property type="match status" value="1"/>
</dbReference>
<dbReference type="Gene3D" id="3.20.20.70">
    <property type="entry name" value="Aldolase class I"/>
    <property type="match status" value="1"/>
</dbReference>
<dbReference type="InterPro" id="IPR013785">
    <property type="entry name" value="Aldolase_TIM"/>
</dbReference>
<dbReference type="InterPro" id="IPR012133">
    <property type="entry name" value="Alpha-hydoxy_acid_DH_FMN"/>
</dbReference>
<dbReference type="InterPro" id="IPR000262">
    <property type="entry name" value="FMN-dep_DH"/>
</dbReference>
<dbReference type="InterPro" id="IPR037396">
    <property type="entry name" value="FMN_HAD"/>
</dbReference>
<dbReference type="InterPro" id="IPR023989">
    <property type="entry name" value="MftD"/>
</dbReference>
<dbReference type="NCBIfam" id="TIGR03966">
    <property type="entry name" value="actino_HemFlav"/>
    <property type="match status" value="1"/>
</dbReference>
<dbReference type="PANTHER" id="PTHR10578:SF107">
    <property type="entry name" value="2-HYDROXYACID OXIDASE 1"/>
    <property type="match status" value="1"/>
</dbReference>
<dbReference type="PANTHER" id="PTHR10578">
    <property type="entry name" value="S -2-HYDROXY-ACID OXIDASE-RELATED"/>
    <property type="match status" value="1"/>
</dbReference>
<dbReference type="Pfam" id="PF01070">
    <property type="entry name" value="FMN_dh"/>
    <property type="match status" value="1"/>
</dbReference>
<dbReference type="PIRSF" id="PIRSF000138">
    <property type="entry name" value="Al-hdrx_acd_dh"/>
    <property type="match status" value="1"/>
</dbReference>
<dbReference type="SUPFAM" id="SSF51395">
    <property type="entry name" value="FMN-linked oxidoreductases"/>
    <property type="match status" value="1"/>
</dbReference>
<dbReference type="PROSITE" id="PS51349">
    <property type="entry name" value="FMN_HYDROXY_ACID_DH_2"/>
    <property type="match status" value="1"/>
</dbReference>
<reference key="1">
    <citation type="journal article" date="1998" name="Nature">
        <title>Deciphering the biology of Mycobacterium tuberculosis from the complete genome sequence.</title>
        <authorList>
            <person name="Cole S.T."/>
            <person name="Brosch R."/>
            <person name="Parkhill J."/>
            <person name="Garnier T."/>
            <person name="Churcher C.M."/>
            <person name="Harris D.E."/>
            <person name="Gordon S.V."/>
            <person name="Eiglmeier K."/>
            <person name="Gas S."/>
            <person name="Barry C.E. III"/>
            <person name="Tekaia F."/>
            <person name="Badcock K."/>
            <person name="Basham D."/>
            <person name="Brown D."/>
            <person name="Chillingworth T."/>
            <person name="Connor R."/>
            <person name="Davies R.M."/>
            <person name="Devlin K."/>
            <person name="Feltwell T."/>
            <person name="Gentles S."/>
            <person name="Hamlin N."/>
            <person name="Holroyd S."/>
            <person name="Hornsby T."/>
            <person name="Jagels K."/>
            <person name="Krogh A."/>
            <person name="McLean J."/>
            <person name="Moule S."/>
            <person name="Murphy L.D."/>
            <person name="Oliver S."/>
            <person name="Osborne J."/>
            <person name="Quail M.A."/>
            <person name="Rajandream M.A."/>
            <person name="Rogers J."/>
            <person name="Rutter S."/>
            <person name="Seeger K."/>
            <person name="Skelton S."/>
            <person name="Squares S."/>
            <person name="Squares R."/>
            <person name="Sulston J.E."/>
            <person name="Taylor K."/>
            <person name="Whitehead S."/>
            <person name="Barrell B.G."/>
        </authorList>
    </citation>
    <scope>NUCLEOTIDE SEQUENCE [LARGE SCALE GENOMIC DNA]</scope>
    <source>
        <strain>ATCC 25618 / H37Rv</strain>
    </source>
</reference>
<reference key="2">
    <citation type="journal article" date="2011" name="BMC Genomics">
        <title>Bioinformatic evidence for a widely distributed, ribosomally produced electron carrier precursor, its maturation proteins, and its nicotinoprotein redox partners.</title>
        <authorList>
            <person name="Haft D.H."/>
        </authorList>
    </citation>
    <scope>POSSIBLE FUNCTION</scope>
    <source>
        <strain>ATCC 25618 / H37Rv</strain>
    </source>
</reference>
<reference key="3">
    <citation type="journal article" date="2011" name="Mol. Cell. Proteomics">
        <title>Proteogenomic analysis of Mycobacterium tuberculosis by high resolution mass spectrometry.</title>
        <authorList>
            <person name="Kelkar D.S."/>
            <person name="Kumar D."/>
            <person name="Kumar P."/>
            <person name="Balakrishnan L."/>
            <person name="Muthusamy B."/>
            <person name="Yadav A.K."/>
            <person name="Shrivastava P."/>
            <person name="Marimuthu A."/>
            <person name="Anand S."/>
            <person name="Sundaram H."/>
            <person name="Kingsbury R."/>
            <person name="Harsha H.C."/>
            <person name="Nair B."/>
            <person name="Prasad T.S."/>
            <person name="Chauhan D.S."/>
            <person name="Katoch K."/>
            <person name="Katoch V.M."/>
            <person name="Kumar P."/>
            <person name="Chaerkady R."/>
            <person name="Ramachandran S."/>
            <person name="Dash D."/>
            <person name="Pandey A."/>
        </authorList>
    </citation>
    <scope>IDENTIFICATION BY MASS SPECTROMETRY [LARGE SCALE ANALYSIS]</scope>
    <source>
        <strain>ATCC 25618 / H37Rv</strain>
    </source>
</reference>
<organism>
    <name type="scientific">Mycobacterium tuberculosis (strain ATCC 25618 / H37Rv)</name>
    <dbReference type="NCBI Taxonomy" id="83332"/>
    <lineage>
        <taxon>Bacteria</taxon>
        <taxon>Bacillati</taxon>
        <taxon>Actinomycetota</taxon>
        <taxon>Actinomycetes</taxon>
        <taxon>Mycobacteriales</taxon>
        <taxon>Mycobacteriaceae</taxon>
        <taxon>Mycobacterium</taxon>
        <taxon>Mycobacterium tuberculosis complex</taxon>
    </lineage>
</organism>
<sequence length="396" mass="42161">MAEAWFETVAIAQQRAKRRLPKSVYSSLIAASEKGITVADNVAAFSELGFAPHVIGATDKRDLSTTVMGQEVSLPVIISPTGVQAVDPGGEVAVARAAAARGTVMGLSSFASKPIEEVIAANPKTFFQVYWQGGRDALAERVERARQAGAVGLVVTTDWTFSHGRDWGSPKIPEEMNLKTILRLSPEAITRPRWLWKFAKTLRPPDLRVPNQGRRGEPGPPFFAAYGEWMATPPPTWEDIGWLRELWGGPFMLKGVMRVDDAKRAVDAGVSAISVSNHGGNNLDGTPASIRALPAVSAAVGDQVEVLLDGGIRRGSDVVKAVALGARAVMIGRAYLWGLAANGQAGVENVLDILRGGIDSALMGLGHASVHDLSPADILVPTGFIRDLGVPSRRDV</sequence>
<feature type="chain" id="PRO_0000390892" description="Pre-mycofactocin synthase">
    <location>
        <begin position="1"/>
        <end position="396"/>
    </location>
</feature>
<feature type="domain" description="FMN hydroxy acid dehydrogenase" evidence="2">
    <location>
        <begin position="1"/>
        <end position="383"/>
    </location>
</feature>
<feature type="active site" description="Proton acceptor" evidence="2">
    <location>
        <position position="278"/>
    </location>
</feature>
<feature type="binding site" evidence="2">
    <location>
        <position position="108"/>
    </location>
    <ligand>
        <name>FMN</name>
        <dbReference type="ChEBI" id="CHEBI:58210"/>
    </ligand>
</feature>
<feature type="binding site" evidence="2">
    <location>
        <position position="128"/>
    </location>
    <ligand>
        <name>FMN</name>
        <dbReference type="ChEBI" id="CHEBI:58210"/>
    </ligand>
</feature>
<feature type="binding site" evidence="2">
    <location>
        <position position="156"/>
    </location>
    <ligand>
        <name>FMN</name>
        <dbReference type="ChEBI" id="CHEBI:58210"/>
    </ligand>
</feature>
<feature type="binding site" evidence="2">
    <location>
        <position position="254"/>
    </location>
    <ligand>
        <name>FMN</name>
        <dbReference type="ChEBI" id="CHEBI:58210"/>
    </ligand>
</feature>
<feature type="binding site" evidence="2">
    <location>
        <begin position="309"/>
        <end position="313"/>
    </location>
    <ligand>
        <name>FMN</name>
        <dbReference type="ChEBI" id="CHEBI:58210"/>
    </ligand>
</feature>
<feature type="binding site" evidence="2">
    <location>
        <begin position="332"/>
        <end position="333"/>
    </location>
    <ligand>
        <name>FMN</name>
        <dbReference type="ChEBI" id="CHEBI:58210"/>
    </ligand>
</feature>